<organism>
    <name type="scientific">Solibacter usitatus (strain Ellin6076)</name>
    <dbReference type="NCBI Taxonomy" id="234267"/>
    <lineage>
        <taxon>Bacteria</taxon>
        <taxon>Pseudomonadati</taxon>
        <taxon>Acidobacteriota</taxon>
        <taxon>Terriglobia</taxon>
        <taxon>Bryobacterales</taxon>
        <taxon>Solibacteraceae</taxon>
        <taxon>Candidatus Solibacter</taxon>
    </lineage>
</organism>
<accession>Q02C42</accession>
<evidence type="ECO:0000255" key="1">
    <source>
        <dbReference type="HAMAP-Rule" id="MF_01645"/>
    </source>
</evidence>
<gene>
    <name evidence="1" type="primary">allB</name>
    <name type="ordered locus">Acid_0362</name>
</gene>
<feature type="chain" id="PRO_0000317686" description="Allantoinase">
    <location>
        <begin position="1"/>
        <end position="457"/>
    </location>
</feature>
<feature type="binding site" evidence="1">
    <location>
        <position position="58"/>
    </location>
    <ligand>
        <name>Zn(2+)</name>
        <dbReference type="ChEBI" id="CHEBI:29105"/>
        <label>1</label>
    </ligand>
</feature>
<feature type="binding site" evidence="1">
    <location>
        <position position="60"/>
    </location>
    <ligand>
        <name>Zn(2+)</name>
        <dbReference type="ChEBI" id="CHEBI:29105"/>
        <label>1</label>
    </ligand>
</feature>
<feature type="binding site" description="via carbamate group" evidence="1">
    <location>
        <position position="145"/>
    </location>
    <ligand>
        <name>Zn(2+)</name>
        <dbReference type="ChEBI" id="CHEBI:29105"/>
        <label>1</label>
    </ligand>
</feature>
<feature type="binding site" description="via carbamate group" evidence="1">
    <location>
        <position position="145"/>
    </location>
    <ligand>
        <name>Zn(2+)</name>
        <dbReference type="ChEBI" id="CHEBI:29105"/>
        <label>2</label>
    </ligand>
</feature>
<feature type="binding site" evidence="1">
    <location>
        <position position="181"/>
    </location>
    <ligand>
        <name>Zn(2+)</name>
        <dbReference type="ChEBI" id="CHEBI:29105"/>
        <label>2</label>
    </ligand>
</feature>
<feature type="binding site" evidence="1">
    <location>
        <position position="237"/>
    </location>
    <ligand>
        <name>Zn(2+)</name>
        <dbReference type="ChEBI" id="CHEBI:29105"/>
        <label>2</label>
    </ligand>
</feature>
<feature type="binding site" evidence="1">
    <location>
        <position position="310"/>
    </location>
    <ligand>
        <name>Zn(2+)</name>
        <dbReference type="ChEBI" id="CHEBI:29105"/>
        <label>1</label>
    </ligand>
</feature>
<feature type="modified residue" description="N6-carboxylysine" evidence="1">
    <location>
        <position position="145"/>
    </location>
</feature>
<dbReference type="EC" id="3.5.2.5" evidence="1"/>
<dbReference type="EMBL" id="CP000473">
    <property type="protein sequence ID" value="ABJ81374.1"/>
    <property type="molecule type" value="Genomic_DNA"/>
</dbReference>
<dbReference type="SMR" id="Q02C42"/>
<dbReference type="FunCoup" id="Q02C42">
    <property type="interactions" value="599"/>
</dbReference>
<dbReference type="STRING" id="234267.Acid_0362"/>
<dbReference type="KEGG" id="sus:Acid_0362"/>
<dbReference type="eggNOG" id="COG0044">
    <property type="taxonomic scope" value="Bacteria"/>
</dbReference>
<dbReference type="HOGENOM" id="CLU_015572_4_0_0"/>
<dbReference type="InParanoid" id="Q02C42"/>
<dbReference type="OrthoDB" id="9765462at2"/>
<dbReference type="UniPathway" id="UPA00395">
    <property type="reaction ID" value="UER00653"/>
</dbReference>
<dbReference type="GO" id="GO:0005737">
    <property type="term" value="C:cytoplasm"/>
    <property type="evidence" value="ECO:0007669"/>
    <property type="project" value="TreeGrafter"/>
</dbReference>
<dbReference type="GO" id="GO:0004038">
    <property type="term" value="F:allantoinase activity"/>
    <property type="evidence" value="ECO:0007669"/>
    <property type="project" value="UniProtKB-UniRule"/>
</dbReference>
<dbReference type="GO" id="GO:0050897">
    <property type="term" value="F:cobalt ion binding"/>
    <property type="evidence" value="ECO:0007669"/>
    <property type="project" value="InterPro"/>
</dbReference>
<dbReference type="GO" id="GO:0008270">
    <property type="term" value="F:zinc ion binding"/>
    <property type="evidence" value="ECO:0007669"/>
    <property type="project" value="InterPro"/>
</dbReference>
<dbReference type="GO" id="GO:0000256">
    <property type="term" value="P:allantoin catabolic process"/>
    <property type="evidence" value="ECO:0007669"/>
    <property type="project" value="UniProtKB-UniRule"/>
</dbReference>
<dbReference type="GO" id="GO:0006145">
    <property type="term" value="P:purine nucleobase catabolic process"/>
    <property type="evidence" value="ECO:0007669"/>
    <property type="project" value="TreeGrafter"/>
</dbReference>
<dbReference type="Gene3D" id="3.20.20.140">
    <property type="entry name" value="Metal-dependent hydrolases"/>
    <property type="match status" value="1"/>
</dbReference>
<dbReference type="Gene3D" id="2.30.40.10">
    <property type="entry name" value="Urease, subunit C, domain 1"/>
    <property type="match status" value="1"/>
</dbReference>
<dbReference type="HAMAP" id="MF_01645">
    <property type="entry name" value="Hydantoinase"/>
    <property type="match status" value="1"/>
</dbReference>
<dbReference type="InterPro" id="IPR017593">
    <property type="entry name" value="Allantoinase"/>
</dbReference>
<dbReference type="InterPro" id="IPR047604">
    <property type="entry name" value="Allantoinase_bact"/>
</dbReference>
<dbReference type="InterPro" id="IPR006680">
    <property type="entry name" value="Amidohydro-rel"/>
</dbReference>
<dbReference type="InterPro" id="IPR050138">
    <property type="entry name" value="DHOase/Allantoinase_Hydrolase"/>
</dbReference>
<dbReference type="InterPro" id="IPR011059">
    <property type="entry name" value="Metal-dep_hydrolase_composite"/>
</dbReference>
<dbReference type="InterPro" id="IPR032466">
    <property type="entry name" value="Metal_Hydrolase"/>
</dbReference>
<dbReference type="NCBIfam" id="TIGR03178">
    <property type="entry name" value="allantoinase"/>
    <property type="match status" value="1"/>
</dbReference>
<dbReference type="NCBIfam" id="NF004839">
    <property type="entry name" value="PRK06189.1"/>
    <property type="match status" value="1"/>
</dbReference>
<dbReference type="PANTHER" id="PTHR43668">
    <property type="entry name" value="ALLANTOINASE"/>
    <property type="match status" value="1"/>
</dbReference>
<dbReference type="PANTHER" id="PTHR43668:SF4">
    <property type="entry name" value="ALLANTOINASE"/>
    <property type="match status" value="1"/>
</dbReference>
<dbReference type="Pfam" id="PF01979">
    <property type="entry name" value="Amidohydro_1"/>
    <property type="match status" value="1"/>
</dbReference>
<dbReference type="SUPFAM" id="SSF51338">
    <property type="entry name" value="Composite domain of metallo-dependent hydrolases"/>
    <property type="match status" value="1"/>
</dbReference>
<dbReference type="SUPFAM" id="SSF51556">
    <property type="entry name" value="Metallo-dependent hydrolases"/>
    <property type="match status" value="1"/>
</dbReference>
<sequence length="457" mass="48807">MSECVVRGGQVVQAGGVVSADVAIEDGRISAIGPELPGAKREINARGLTVFPGVIDDHLHFNEPGRTEWEGAATGSRALAAGGGTAFFDMPLNSTPCTVDRAAFAGKRAALERASIADFALWGGIVPGNLSELAPLAESGVIGFKAFLSDSGLPEFPRADDLTLYEGMREAARLGLPVAVHAESEEITSRLTRRARDAGRTSARDYLDSRPVIAEVEAIHRAALLAREAGCKLHIVHISSGRGVAAALEARTMGTDIAIETCAHYLFFTEDDLLRLGAIAKCAPPLRDRQEFDRLWAHVLGGIVDVVASDHSPAPPAMKTGDDFFAIWGGIAGVQSTLAVLLEAGHFQRGLRLERIAELTAGYPARRFALHNKGSIAVGNDADLTLVDMDGQENLEPESLWQKHPVNPYTGNSFRGSIRRTMLRGTTIFNHDEITVKSGGQLLRPKANTYATSGIHP</sequence>
<keyword id="KW-0378">Hydrolase</keyword>
<keyword id="KW-0479">Metal-binding</keyword>
<keyword id="KW-0659">Purine metabolism</keyword>
<keyword id="KW-0862">Zinc</keyword>
<protein>
    <recommendedName>
        <fullName evidence="1">Allantoinase</fullName>
        <ecNumber evidence="1">3.5.2.5</ecNumber>
    </recommendedName>
    <alternativeName>
        <fullName evidence="1">Allantoin-utilizing enzyme</fullName>
    </alternativeName>
</protein>
<reference key="1">
    <citation type="journal article" date="2009" name="Appl. Environ. Microbiol.">
        <title>Three genomes from the phylum Acidobacteria provide insight into the lifestyles of these microorganisms in soils.</title>
        <authorList>
            <person name="Ward N.L."/>
            <person name="Challacombe J.F."/>
            <person name="Janssen P.H."/>
            <person name="Henrissat B."/>
            <person name="Coutinho P.M."/>
            <person name="Wu M."/>
            <person name="Xie G."/>
            <person name="Haft D.H."/>
            <person name="Sait M."/>
            <person name="Badger J."/>
            <person name="Barabote R.D."/>
            <person name="Bradley B."/>
            <person name="Brettin T.S."/>
            <person name="Brinkac L.M."/>
            <person name="Bruce D."/>
            <person name="Creasy T."/>
            <person name="Daugherty S.C."/>
            <person name="Davidsen T.M."/>
            <person name="DeBoy R.T."/>
            <person name="Detter J.C."/>
            <person name="Dodson R.J."/>
            <person name="Durkin A.S."/>
            <person name="Ganapathy A."/>
            <person name="Gwinn-Giglio M."/>
            <person name="Han C.S."/>
            <person name="Khouri H."/>
            <person name="Kiss H."/>
            <person name="Kothari S.P."/>
            <person name="Madupu R."/>
            <person name="Nelson K.E."/>
            <person name="Nelson W.C."/>
            <person name="Paulsen I."/>
            <person name="Penn K."/>
            <person name="Ren Q."/>
            <person name="Rosovitz M.J."/>
            <person name="Selengut J.D."/>
            <person name="Shrivastava S."/>
            <person name="Sullivan S.A."/>
            <person name="Tapia R."/>
            <person name="Thompson L.S."/>
            <person name="Watkins K.L."/>
            <person name="Yang Q."/>
            <person name="Yu C."/>
            <person name="Zafar N."/>
            <person name="Zhou L."/>
            <person name="Kuske C.R."/>
        </authorList>
    </citation>
    <scope>NUCLEOTIDE SEQUENCE [LARGE SCALE GENOMIC DNA]</scope>
    <source>
        <strain>Ellin6076</strain>
    </source>
</reference>
<name>ALLB_SOLUE</name>
<proteinExistence type="inferred from homology"/>
<comment type="function">
    <text evidence="1">Catalyzes the conversion of allantoin (5-ureidohydantoin) to allantoic acid by hydrolytic cleavage of the five-member hydantoin ring.</text>
</comment>
<comment type="catalytic activity">
    <reaction evidence="1">
        <text>(S)-allantoin + H2O = allantoate + H(+)</text>
        <dbReference type="Rhea" id="RHEA:17029"/>
        <dbReference type="ChEBI" id="CHEBI:15377"/>
        <dbReference type="ChEBI" id="CHEBI:15378"/>
        <dbReference type="ChEBI" id="CHEBI:15678"/>
        <dbReference type="ChEBI" id="CHEBI:17536"/>
        <dbReference type="EC" id="3.5.2.5"/>
    </reaction>
</comment>
<comment type="cofactor">
    <cofactor evidence="1">
        <name>Zn(2+)</name>
        <dbReference type="ChEBI" id="CHEBI:29105"/>
    </cofactor>
    <text evidence="1">Binds 2 Zn(2+) ions per subunit.</text>
</comment>
<comment type="pathway">
    <text evidence="1">Nitrogen metabolism; (S)-allantoin degradation; allantoate from (S)-allantoin: step 1/1.</text>
</comment>
<comment type="subunit">
    <text evidence="1">Homotetramer.</text>
</comment>
<comment type="PTM">
    <text evidence="1">Carboxylation allows a single lysine to coordinate two zinc ions.</text>
</comment>
<comment type="similarity">
    <text evidence="1">Belongs to the metallo-dependent hydrolases superfamily. Allantoinase family.</text>
</comment>